<comment type="function">
    <text evidence="2">S-adenosyl-L-methionine-dependent and membrane-associated arginine methyltransferase that can both catalyze the formation of omega-N monomethylarginine (MMA) and asymmetrical dimethylarginine (aDMA).</text>
</comment>
<comment type="catalytic activity">
    <reaction evidence="2">
        <text>L-arginyl-[protein] + S-adenosyl-L-methionine = N(omega)-methyl-L-arginyl-[protein] + S-adenosyl-L-homocysteine + H(+)</text>
        <dbReference type="Rhea" id="RHEA:48100"/>
        <dbReference type="Rhea" id="RHEA-COMP:10532"/>
        <dbReference type="Rhea" id="RHEA-COMP:11990"/>
        <dbReference type="ChEBI" id="CHEBI:15378"/>
        <dbReference type="ChEBI" id="CHEBI:29965"/>
        <dbReference type="ChEBI" id="CHEBI:57856"/>
        <dbReference type="ChEBI" id="CHEBI:59789"/>
        <dbReference type="ChEBI" id="CHEBI:65280"/>
    </reaction>
    <physiologicalReaction direction="left-to-right" evidence="2">
        <dbReference type="Rhea" id="RHEA:48101"/>
    </physiologicalReaction>
</comment>
<comment type="catalytic activity">
    <reaction evidence="2">
        <text>L-arginyl-[protein] + 2 S-adenosyl-L-methionine = N(omega),N(omega)-dimethyl-L-arginyl-[protein] + 2 S-adenosyl-L-homocysteine + 2 H(+)</text>
        <dbReference type="Rhea" id="RHEA:48096"/>
        <dbReference type="Rhea" id="RHEA-COMP:10532"/>
        <dbReference type="Rhea" id="RHEA-COMP:11991"/>
        <dbReference type="ChEBI" id="CHEBI:15378"/>
        <dbReference type="ChEBI" id="CHEBI:29965"/>
        <dbReference type="ChEBI" id="CHEBI:57856"/>
        <dbReference type="ChEBI" id="CHEBI:59789"/>
        <dbReference type="ChEBI" id="CHEBI:61897"/>
        <dbReference type="EC" id="2.1.1.319"/>
    </reaction>
    <physiologicalReaction direction="left-to-right" evidence="2">
        <dbReference type="Rhea" id="RHEA:48097"/>
    </physiologicalReaction>
</comment>
<comment type="subunit">
    <text evidence="2">Homodimer. Tetramer; individual homodimers associates to form a homotetramer. Homooctamer; individual homodimers associates to form a homooctamer and homooligomerization is required for proper localization to the cell membrane.</text>
</comment>
<comment type="subcellular location">
    <subcellularLocation>
        <location evidence="2">Cell membrane</location>
        <topology evidence="2">Lipid-anchor</topology>
        <orientation evidence="2">Cytoplasmic side</orientation>
    </subcellularLocation>
</comment>
<comment type="domain">
    <text evidence="2">The N-terminal region (1-60) inhibits the arginine N-methyltransferase activity.</text>
</comment>
<comment type="similarity">
    <text evidence="3">Belongs to the class I-like SAM-binding methyltransferase superfamily. Protein arginine N-methyltransferase family. PRMT8 subfamily.</text>
</comment>
<comment type="sequence caution" evidence="5">
    <conflict type="erroneous initiation">
        <sequence resource="EMBL-CDS" id="AAI62920"/>
    </conflict>
</comment>
<comment type="sequence caution" evidence="5">
    <conflict type="erroneous initiation">
        <sequence resource="EMBL-CDS" id="AAI62940"/>
    </conflict>
</comment>
<comment type="sequence caution" evidence="5">
    <conflict type="erroneous gene model prediction">
        <sequence resource="EMBL-CDS" id="CAI20944"/>
    </conflict>
</comment>
<keyword id="KW-1003">Cell membrane</keyword>
<keyword id="KW-0449">Lipoprotein</keyword>
<keyword id="KW-0472">Membrane</keyword>
<keyword id="KW-0488">Methylation</keyword>
<keyword id="KW-0489">Methyltransferase</keyword>
<keyword id="KW-0519">Myristate</keyword>
<keyword id="KW-1185">Reference proteome</keyword>
<keyword id="KW-0677">Repeat</keyword>
<keyword id="KW-0949">S-adenosyl-L-methionine</keyword>
<keyword id="KW-0808">Transferase</keyword>
<reference key="1">
    <citation type="journal article" date="2013" name="Nature">
        <title>The zebrafish reference genome sequence and its relationship to the human genome.</title>
        <authorList>
            <person name="Howe K."/>
            <person name="Clark M.D."/>
            <person name="Torroja C.F."/>
            <person name="Torrance J."/>
            <person name="Berthelot C."/>
            <person name="Muffato M."/>
            <person name="Collins J.E."/>
            <person name="Humphray S."/>
            <person name="McLaren K."/>
            <person name="Matthews L."/>
            <person name="McLaren S."/>
            <person name="Sealy I."/>
            <person name="Caccamo M."/>
            <person name="Churcher C."/>
            <person name="Scott C."/>
            <person name="Barrett J.C."/>
            <person name="Koch R."/>
            <person name="Rauch G.J."/>
            <person name="White S."/>
            <person name="Chow W."/>
            <person name="Kilian B."/>
            <person name="Quintais L.T."/>
            <person name="Guerra-Assuncao J.A."/>
            <person name="Zhou Y."/>
            <person name="Gu Y."/>
            <person name="Yen J."/>
            <person name="Vogel J.H."/>
            <person name="Eyre T."/>
            <person name="Redmond S."/>
            <person name="Banerjee R."/>
            <person name="Chi J."/>
            <person name="Fu B."/>
            <person name="Langley E."/>
            <person name="Maguire S.F."/>
            <person name="Laird G.K."/>
            <person name="Lloyd D."/>
            <person name="Kenyon E."/>
            <person name="Donaldson S."/>
            <person name="Sehra H."/>
            <person name="Almeida-King J."/>
            <person name="Loveland J."/>
            <person name="Trevanion S."/>
            <person name="Jones M."/>
            <person name="Quail M."/>
            <person name="Willey D."/>
            <person name="Hunt A."/>
            <person name="Burton J."/>
            <person name="Sims S."/>
            <person name="McLay K."/>
            <person name="Plumb B."/>
            <person name="Davis J."/>
            <person name="Clee C."/>
            <person name="Oliver K."/>
            <person name="Clark R."/>
            <person name="Riddle C."/>
            <person name="Elliot D."/>
            <person name="Threadgold G."/>
            <person name="Harden G."/>
            <person name="Ware D."/>
            <person name="Begum S."/>
            <person name="Mortimore B."/>
            <person name="Kerry G."/>
            <person name="Heath P."/>
            <person name="Phillimore B."/>
            <person name="Tracey A."/>
            <person name="Corby N."/>
            <person name="Dunn M."/>
            <person name="Johnson C."/>
            <person name="Wood J."/>
            <person name="Clark S."/>
            <person name="Pelan S."/>
            <person name="Griffiths G."/>
            <person name="Smith M."/>
            <person name="Glithero R."/>
            <person name="Howden P."/>
            <person name="Barker N."/>
            <person name="Lloyd C."/>
            <person name="Stevens C."/>
            <person name="Harley J."/>
            <person name="Holt K."/>
            <person name="Panagiotidis G."/>
            <person name="Lovell J."/>
            <person name="Beasley H."/>
            <person name="Henderson C."/>
            <person name="Gordon D."/>
            <person name="Auger K."/>
            <person name="Wright D."/>
            <person name="Collins J."/>
            <person name="Raisen C."/>
            <person name="Dyer L."/>
            <person name="Leung K."/>
            <person name="Robertson L."/>
            <person name="Ambridge K."/>
            <person name="Leongamornlert D."/>
            <person name="McGuire S."/>
            <person name="Gilderthorp R."/>
            <person name="Griffiths C."/>
            <person name="Manthravadi D."/>
            <person name="Nichol S."/>
            <person name="Barker G."/>
            <person name="Whitehead S."/>
            <person name="Kay M."/>
            <person name="Brown J."/>
            <person name="Murnane C."/>
            <person name="Gray E."/>
            <person name="Humphries M."/>
            <person name="Sycamore N."/>
            <person name="Barker D."/>
            <person name="Saunders D."/>
            <person name="Wallis J."/>
            <person name="Babbage A."/>
            <person name="Hammond S."/>
            <person name="Mashreghi-Mohammadi M."/>
            <person name="Barr L."/>
            <person name="Martin S."/>
            <person name="Wray P."/>
            <person name="Ellington A."/>
            <person name="Matthews N."/>
            <person name="Ellwood M."/>
            <person name="Woodmansey R."/>
            <person name="Clark G."/>
            <person name="Cooper J."/>
            <person name="Tromans A."/>
            <person name="Grafham D."/>
            <person name="Skuce C."/>
            <person name="Pandian R."/>
            <person name="Andrews R."/>
            <person name="Harrison E."/>
            <person name="Kimberley A."/>
            <person name="Garnett J."/>
            <person name="Fosker N."/>
            <person name="Hall R."/>
            <person name="Garner P."/>
            <person name="Kelly D."/>
            <person name="Bird C."/>
            <person name="Palmer S."/>
            <person name="Gehring I."/>
            <person name="Berger A."/>
            <person name="Dooley C.M."/>
            <person name="Ersan-Urun Z."/>
            <person name="Eser C."/>
            <person name="Geiger H."/>
            <person name="Geisler M."/>
            <person name="Karotki L."/>
            <person name="Kirn A."/>
            <person name="Konantz J."/>
            <person name="Konantz M."/>
            <person name="Oberlander M."/>
            <person name="Rudolph-Geiger S."/>
            <person name="Teucke M."/>
            <person name="Lanz C."/>
            <person name="Raddatz G."/>
            <person name="Osoegawa K."/>
            <person name="Zhu B."/>
            <person name="Rapp A."/>
            <person name="Widaa S."/>
            <person name="Langford C."/>
            <person name="Yang F."/>
            <person name="Schuster S.C."/>
            <person name="Carter N.P."/>
            <person name="Harrow J."/>
            <person name="Ning Z."/>
            <person name="Herrero J."/>
            <person name="Searle S.M."/>
            <person name="Enright A."/>
            <person name="Geisler R."/>
            <person name="Plasterk R.H."/>
            <person name="Lee C."/>
            <person name="Westerfield M."/>
            <person name="de Jong P.J."/>
            <person name="Zon L.I."/>
            <person name="Postlethwait J.H."/>
            <person name="Nusslein-Volhard C."/>
            <person name="Hubbard T.J."/>
            <person name="Roest Crollius H."/>
            <person name="Rogers J."/>
            <person name="Stemple D.L."/>
        </authorList>
    </citation>
    <scope>NUCLEOTIDE SEQUENCE [LARGE SCALE GENOMIC DNA]</scope>
    <source>
        <strain>Tuebingen</strain>
    </source>
</reference>
<reference key="2">
    <citation type="submission" date="2008-04" db="EMBL/GenBank/DDBJ databases">
        <authorList>
            <consortium name="NIH - Zebrafish Gene Collection (ZGC) project"/>
        </authorList>
    </citation>
    <scope>NUCLEOTIDE SEQUENCE [LARGE SCALE MRNA] OF 74-419</scope>
</reference>
<reference key="3">
    <citation type="journal article" date="2004" name="Gene">
        <title>Identification and phylogenetic analyses of the protein arginine methyltransferase gene family in fish and ascidians.</title>
        <authorList>
            <person name="Hung C.M."/>
            <person name="Li C."/>
        </authorList>
    </citation>
    <scope>IDENTIFICATION</scope>
</reference>
<proteinExistence type="evidence at transcript level"/>
<evidence type="ECO:0000250" key="1">
    <source>
        <dbReference type="UniProtKB" id="Q63009"/>
    </source>
</evidence>
<evidence type="ECO:0000250" key="2">
    <source>
        <dbReference type="UniProtKB" id="Q9NR22"/>
    </source>
</evidence>
<evidence type="ECO:0000255" key="3">
    <source>
        <dbReference type="PROSITE-ProRule" id="PRU01015"/>
    </source>
</evidence>
<evidence type="ECO:0000256" key="4">
    <source>
        <dbReference type="SAM" id="MobiDB-lite"/>
    </source>
</evidence>
<evidence type="ECO:0000305" key="5"/>
<protein>
    <recommendedName>
        <fullName evidence="5">Protein arginine N-methyltransferase 8-B</fullName>
        <ecNumber evidence="2">2.1.1.319</ecNumber>
    </recommendedName>
    <alternativeName>
        <fullName>Heterogeneous nuclear ribonucleoprotein methyltransferase-like protein 4</fullName>
    </alternativeName>
    <alternativeName>
        <fullName>zfL3</fullName>
    </alternativeName>
</protein>
<name>ANM8B_DANRE</name>
<accession>Q5RGQ2</accession>
<gene>
    <name type="primary">prmt8b</name>
    <name type="synonym">prmt8</name>
    <name type="ORF">si:dkey-21h14.6</name>
</gene>
<dbReference type="EC" id="2.1.1.319" evidence="2"/>
<dbReference type="EMBL" id="BX784029">
    <property type="protein sequence ID" value="CAI20944.1"/>
    <property type="status" value="ALT_SEQ"/>
    <property type="molecule type" value="Genomic_DNA"/>
</dbReference>
<dbReference type="EMBL" id="BC162920">
    <property type="protein sequence ID" value="AAI62920.1"/>
    <property type="status" value="ALT_INIT"/>
    <property type="molecule type" value="mRNA"/>
</dbReference>
<dbReference type="EMBL" id="BC162940">
    <property type="protein sequence ID" value="AAI62940.1"/>
    <property type="status" value="ALT_INIT"/>
    <property type="molecule type" value="mRNA"/>
</dbReference>
<dbReference type="RefSeq" id="NP_001038507.1">
    <property type="nucleotide sequence ID" value="NM_001045042.1"/>
</dbReference>
<dbReference type="RefSeq" id="XP_005164712.1">
    <property type="nucleotide sequence ID" value="XM_005164655.5"/>
</dbReference>
<dbReference type="SMR" id="Q5RGQ2"/>
<dbReference type="FunCoup" id="Q5RGQ2">
    <property type="interactions" value="1237"/>
</dbReference>
<dbReference type="STRING" id="7955.ENSDARP00000148688"/>
<dbReference type="PaxDb" id="7955-ENSDARP00000059488"/>
<dbReference type="Ensembl" id="ENSDART00000059489">
    <property type="protein sequence ID" value="ENSDARP00000059488"/>
    <property type="gene ID" value="ENSDARG00000045760"/>
</dbReference>
<dbReference type="GeneID" id="564110"/>
<dbReference type="KEGG" id="dre:564110"/>
<dbReference type="AGR" id="ZFIN:ZDB-GENE-030131-7791"/>
<dbReference type="CTD" id="564110"/>
<dbReference type="ZFIN" id="ZDB-GENE-030131-7791">
    <property type="gene designation" value="prmt8b"/>
</dbReference>
<dbReference type="eggNOG" id="KOG1499">
    <property type="taxonomic scope" value="Eukaryota"/>
</dbReference>
<dbReference type="HOGENOM" id="CLU_017375_1_1_1"/>
<dbReference type="InParanoid" id="Q5RGQ2"/>
<dbReference type="OrthoDB" id="7848332at2759"/>
<dbReference type="PhylomeDB" id="Q5RGQ2"/>
<dbReference type="TreeFam" id="TF300608"/>
<dbReference type="PRO" id="PR:Q5RGQ2"/>
<dbReference type="Proteomes" id="UP000000437">
    <property type="component" value="Chromosome 4"/>
</dbReference>
<dbReference type="Bgee" id="ENSDARG00000045760">
    <property type="expression patterns" value="Expressed in brain and 10 other cell types or tissues"/>
</dbReference>
<dbReference type="GO" id="GO:0009898">
    <property type="term" value="C:cytoplasmic side of plasma membrane"/>
    <property type="evidence" value="ECO:0000250"/>
    <property type="project" value="UniProtKB"/>
</dbReference>
<dbReference type="GO" id="GO:0005886">
    <property type="term" value="C:plasma membrane"/>
    <property type="evidence" value="ECO:0000250"/>
    <property type="project" value="UniProtKB"/>
</dbReference>
<dbReference type="GO" id="GO:0016273">
    <property type="term" value="F:arginine N-methyltransferase activity"/>
    <property type="evidence" value="ECO:0000314"/>
    <property type="project" value="ZFIN"/>
</dbReference>
<dbReference type="GO" id="GO:0042054">
    <property type="term" value="F:histone methyltransferase activity"/>
    <property type="evidence" value="ECO:0000318"/>
    <property type="project" value="GO_Central"/>
</dbReference>
<dbReference type="GO" id="GO:0042802">
    <property type="term" value="F:identical protein binding"/>
    <property type="evidence" value="ECO:0000250"/>
    <property type="project" value="UniProtKB"/>
</dbReference>
<dbReference type="GO" id="GO:0035242">
    <property type="term" value="F:protein-arginine omega-N asymmetric methyltransferase activity"/>
    <property type="evidence" value="ECO:0000250"/>
    <property type="project" value="UniProtKB"/>
</dbReference>
<dbReference type="GO" id="GO:0035241">
    <property type="term" value="F:protein-arginine omega-N monomethyltransferase activity"/>
    <property type="evidence" value="ECO:0000250"/>
    <property type="project" value="UniProtKB"/>
</dbReference>
<dbReference type="GO" id="GO:1904047">
    <property type="term" value="F:S-adenosyl-L-methionine binding"/>
    <property type="evidence" value="ECO:0000250"/>
    <property type="project" value="UniProtKB"/>
</dbReference>
<dbReference type="GO" id="GO:0008757">
    <property type="term" value="F:S-adenosylmethionine-dependent methyltransferase activity"/>
    <property type="evidence" value="ECO:0000250"/>
    <property type="project" value="ZFIN"/>
</dbReference>
<dbReference type="GO" id="GO:0043009">
    <property type="term" value="P:chordate embryonic development"/>
    <property type="evidence" value="ECO:0000315"/>
    <property type="project" value="ZFIN"/>
</dbReference>
<dbReference type="GO" id="GO:0006338">
    <property type="term" value="P:chromatin remodeling"/>
    <property type="evidence" value="ECO:0000318"/>
    <property type="project" value="GO_Central"/>
</dbReference>
<dbReference type="GO" id="GO:0048813">
    <property type="term" value="P:dendrite morphogenesis"/>
    <property type="evidence" value="ECO:0000315"/>
    <property type="project" value="ZFIN"/>
</dbReference>
<dbReference type="GO" id="GO:0030917">
    <property type="term" value="P:midbrain-hindbrain boundary development"/>
    <property type="evidence" value="ECO:0000315"/>
    <property type="project" value="ZFIN"/>
</dbReference>
<dbReference type="GO" id="GO:0048666">
    <property type="term" value="P:neuron development"/>
    <property type="evidence" value="ECO:0000315"/>
    <property type="project" value="ZFIN"/>
</dbReference>
<dbReference type="GO" id="GO:0018216">
    <property type="term" value="P:peptidyl-arginine methylation"/>
    <property type="evidence" value="ECO:0000250"/>
    <property type="project" value="UniProtKB"/>
</dbReference>
<dbReference type="GO" id="GO:0051260">
    <property type="term" value="P:protein homooligomerization"/>
    <property type="evidence" value="ECO:0000250"/>
    <property type="project" value="UniProtKB"/>
</dbReference>
<dbReference type="GO" id="GO:0006479">
    <property type="term" value="P:protein methylation"/>
    <property type="evidence" value="ECO:0000250"/>
    <property type="project" value="UniProtKB"/>
</dbReference>
<dbReference type="GO" id="GO:0006355">
    <property type="term" value="P:regulation of DNA-templated transcription"/>
    <property type="evidence" value="ECO:0000318"/>
    <property type="project" value="GO_Central"/>
</dbReference>
<dbReference type="CDD" id="cd02440">
    <property type="entry name" value="AdoMet_MTases"/>
    <property type="match status" value="1"/>
</dbReference>
<dbReference type="FunFam" id="2.70.160.11:FF:000001">
    <property type="entry name" value="Blast:Protein arginine N-methyltransferase 1"/>
    <property type="match status" value="1"/>
</dbReference>
<dbReference type="FunFam" id="3.40.50.150:FF:000003">
    <property type="entry name" value="Blast:Protein arginine N-methyltransferase 1"/>
    <property type="match status" value="1"/>
</dbReference>
<dbReference type="Gene3D" id="2.70.160.11">
    <property type="entry name" value="Hnrnp arginine n-methyltransferase1"/>
    <property type="match status" value="1"/>
</dbReference>
<dbReference type="Gene3D" id="3.40.50.150">
    <property type="entry name" value="Vaccinia Virus protein VP39"/>
    <property type="match status" value="1"/>
</dbReference>
<dbReference type="InterPro" id="IPR025799">
    <property type="entry name" value="Arg_MeTrfase"/>
</dbReference>
<dbReference type="InterPro" id="IPR041698">
    <property type="entry name" value="Methyltransf_25"/>
</dbReference>
<dbReference type="InterPro" id="IPR055135">
    <property type="entry name" value="PRMT_dom"/>
</dbReference>
<dbReference type="InterPro" id="IPR029063">
    <property type="entry name" value="SAM-dependent_MTases_sf"/>
</dbReference>
<dbReference type="PANTHER" id="PTHR11006">
    <property type="entry name" value="PROTEIN ARGININE N-METHYLTRANSFERASE"/>
    <property type="match status" value="1"/>
</dbReference>
<dbReference type="PANTHER" id="PTHR11006:SF47">
    <property type="entry name" value="PROTEIN ARGININE N-METHYLTRANSFERASE 8"/>
    <property type="match status" value="1"/>
</dbReference>
<dbReference type="Pfam" id="PF13649">
    <property type="entry name" value="Methyltransf_25"/>
    <property type="match status" value="1"/>
</dbReference>
<dbReference type="Pfam" id="PF22528">
    <property type="entry name" value="PRMT_C"/>
    <property type="match status" value="1"/>
</dbReference>
<dbReference type="SUPFAM" id="SSF53335">
    <property type="entry name" value="S-adenosyl-L-methionine-dependent methyltransferases"/>
    <property type="match status" value="1"/>
</dbReference>
<dbReference type="PROSITE" id="PS51678">
    <property type="entry name" value="SAM_MT_PRMT"/>
    <property type="match status" value="1"/>
</dbReference>
<organism>
    <name type="scientific">Danio rerio</name>
    <name type="common">Zebrafish</name>
    <name type="synonym">Brachydanio rerio</name>
    <dbReference type="NCBI Taxonomy" id="7955"/>
    <lineage>
        <taxon>Eukaryota</taxon>
        <taxon>Metazoa</taxon>
        <taxon>Chordata</taxon>
        <taxon>Craniata</taxon>
        <taxon>Vertebrata</taxon>
        <taxon>Euteleostomi</taxon>
        <taxon>Actinopterygii</taxon>
        <taxon>Neopterygii</taxon>
        <taxon>Teleostei</taxon>
        <taxon>Ostariophysi</taxon>
        <taxon>Cypriniformes</taxon>
        <taxon>Danionidae</taxon>
        <taxon>Danioninae</taxon>
        <taxon>Danio</taxon>
    </lineage>
</organism>
<feature type="initiator methionine" description="Removed" evidence="2">
    <location>
        <position position="1"/>
    </location>
</feature>
<feature type="chain" id="PRO_0000378153" description="Protein arginine N-methyltransferase 8-B">
    <location>
        <begin position="2"/>
        <end position="419"/>
    </location>
</feature>
<feature type="domain" description="SAM-dependent MTase PRMT-type" evidence="3">
    <location>
        <begin position="98"/>
        <end position="402"/>
    </location>
</feature>
<feature type="region of interest" description="Disordered" evidence="4">
    <location>
        <begin position="1"/>
        <end position="79"/>
    </location>
</feature>
<feature type="compositionally biased region" description="Basic residues" evidence="4">
    <location>
        <begin position="1"/>
        <end position="14"/>
    </location>
</feature>
<feature type="compositionally biased region" description="Low complexity" evidence="4">
    <location>
        <begin position="33"/>
        <end position="63"/>
    </location>
</feature>
<feature type="active site" evidence="1">
    <location>
        <position position="210"/>
    </location>
</feature>
<feature type="active site" evidence="1">
    <location>
        <position position="219"/>
    </location>
</feature>
<feature type="binding site" evidence="1">
    <location>
        <position position="111"/>
    </location>
    <ligand>
        <name>S-adenosyl-L-methionine</name>
        <dbReference type="ChEBI" id="CHEBI:59789"/>
    </ligand>
</feature>
<feature type="binding site" evidence="2">
    <location>
        <position position="120"/>
    </location>
    <ligand>
        <name>S-adenosyl-L-methionine</name>
        <dbReference type="ChEBI" id="CHEBI:59789"/>
    </ligand>
</feature>
<feature type="binding site" evidence="2">
    <location>
        <begin position="144"/>
        <end position="147"/>
    </location>
    <ligand>
        <name>S-adenosyl-L-methionine</name>
        <dbReference type="ChEBI" id="CHEBI:59789"/>
    </ligand>
</feature>
<feature type="binding site" evidence="2">
    <location>
        <position position="144"/>
    </location>
    <ligand>
        <name>S-adenosyl-L-methionine</name>
        <dbReference type="ChEBI" id="CHEBI:59789"/>
    </ligand>
</feature>
<feature type="binding site" evidence="2">
    <location>
        <position position="166"/>
    </location>
    <ligand>
        <name>S-adenosyl-L-methionine</name>
        <dbReference type="ChEBI" id="CHEBI:59789"/>
    </ligand>
</feature>
<feature type="binding site" evidence="2">
    <location>
        <position position="195"/>
    </location>
    <ligand>
        <name>S-adenosyl-L-methionine</name>
        <dbReference type="ChEBI" id="CHEBI:59789"/>
    </ligand>
</feature>
<feature type="modified residue" description="Omega-N-methylarginine" evidence="2">
    <location>
        <position position="83"/>
    </location>
</feature>
<feature type="modified residue" description="Asymmetric dimethylarginine" evidence="2">
    <location>
        <position position="98"/>
    </location>
</feature>
<feature type="lipid moiety-binding region" description="N-myristoyl glycine" evidence="2">
    <location>
        <position position="2"/>
    </location>
</feature>
<sequence>MGLRHSSRCLLLRRKMAEAESTEQQQQKHKQPQHQQQQSISSIPSSQSLQPSPLPKPVTSVHHVPPHPPHTPHVSALSACPGRGKMAKLLNPEEMTSRDYYFDSYAHFGIHEEMLKDEVRTLTYRNSMYHNKHIFKDKIVLDVGSGTGILSMFAAKAGAKHVYGIECSSISEYSEKIIKSNHLDSVITILKGKVEETELPVDQVDIIISEWMGYCLFYESMLNTVIYARDKWLKPGGFMFPDRATLYVVAIEDRQYKDFKIHWWENVYGFDMTCIRNVAMMEPLVDIVDPKQVVTNSCLVKEVDIYTVKTEDLSFTSAFCLQIQRNDYVHALVTYFNIEFTKCHKKTGFSTAPDAPSTHWKQTVFYLEDYLTVRRGEEILGSITVRPNENNERDLDFTFELDFKGQLCDAAISHDYKMR</sequence>